<dbReference type="EC" id="2.1.1.104"/>
<dbReference type="EMBL" id="AC012563">
    <property type="protein sequence ID" value="AAG52015.1"/>
    <property type="molecule type" value="Genomic_DNA"/>
</dbReference>
<dbReference type="EMBL" id="CP002684">
    <property type="protein sequence ID" value="AEE34731.1"/>
    <property type="molecule type" value="Genomic_DNA"/>
</dbReference>
<dbReference type="EMBL" id="L40031">
    <property type="protein sequence ID" value="AAA62426.1"/>
    <property type="status" value="ALT_INIT"/>
    <property type="molecule type" value="mRNA"/>
</dbReference>
<dbReference type="PIR" id="G96702">
    <property type="entry name" value="G96702"/>
</dbReference>
<dbReference type="RefSeq" id="NP_564916.2">
    <molecule id="Q9C9W3-1"/>
    <property type="nucleotide sequence ID" value="NM_105468.3"/>
</dbReference>
<dbReference type="SMR" id="Q9C9W3"/>
<dbReference type="FunCoup" id="Q9C9W3">
    <property type="interactions" value="625"/>
</dbReference>
<dbReference type="STRING" id="3702.Q9C9W3"/>
<dbReference type="PaxDb" id="3702-AT1G67980.1"/>
<dbReference type="ProteomicsDB" id="239186">
    <molecule id="Q9C9W3-1"/>
</dbReference>
<dbReference type="EnsemblPlants" id="AT1G67980.1">
    <molecule id="Q9C9W3-1"/>
    <property type="protein sequence ID" value="AT1G67980.1"/>
    <property type="gene ID" value="AT1G67980"/>
</dbReference>
<dbReference type="Gramene" id="AT1G67980.1">
    <molecule id="Q9C9W3-1"/>
    <property type="protein sequence ID" value="AT1G67980.1"/>
    <property type="gene ID" value="AT1G67980"/>
</dbReference>
<dbReference type="KEGG" id="ath:AT1G67980"/>
<dbReference type="Araport" id="AT1G67980"/>
<dbReference type="TAIR" id="AT1G67980">
    <property type="gene designation" value="CCOAMT"/>
</dbReference>
<dbReference type="eggNOG" id="KOG1663">
    <property type="taxonomic scope" value="Eukaryota"/>
</dbReference>
<dbReference type="HOGENOM" id="CLU_067676_5_0_1"/>
<dbReference type="InParanoid" id="Q9C9W3"/>
<dbReference type="OMA" id="YIEYHEL"/>
<dbReference type="OrthoDB" id="10251242at2759"/>
<dbReference type="PhylomeDB" id="Q9C9W3"/>
<dbReference type="BioCyc" id="ARA:AT1G67980-MONOMER"/>
<dbReference type="UniPathway" id="UPA00711"/>
<dbReference type="PRO" id="PR:Q9C9W3"/>
<dbReference type="Proteomes" id="UP000006548">
    <property type="component" value="Chromosome 1"/>
</dbReference>
<dbReference type="ExpressionAtlas" id="Q9C9W3">
    <property type="expression patterns" value="baseline and differential"/>
</dbReference>
<dbReference type="GO" id="GO:0005829">
    <property type="term" value="C:cytosol"/>
    <property type="evidence" value="ECO:0000304"/>
    <property type="project" value="TAIR"/>
</dbReference>
<dbReference type="GO" id="GO:0042409">
    <property type="term" value="F:caffeoyl-CoA O-methyltransferase activity"/>
    <property type="evidence" value="ECO:0007669"/>
    <property type="project" value="UniProtKB-EC"/>
</dbReference>
<dbReference type="GO" id="GO:0046872">
    <property type="term" value="F:metal ion binding"/>
    <property type="evidence" value="ECO:0007669"/>
    <property type="project" value="UniProtKB-KW"/>
</dbReference>
<dbReference type="GO" id="GO:0009809">
    <property type="term" value="P:lignin biosynthetic process"/>
    <property type="evidence" value="ECO:0000250"/>
    <property type="project" value="TAIR"/>
</dbReference>
<dbReference type="GO" id="GO:0032259">
    <property type="term" value="P:methylation"/>
    <property type="evidence" value="ECO:0007669"/>
    <property type="project" value="UniProtKB-KW"/>
</dbReference>
<dbReference type="CDD" id="cd02440">
    <property type="entry name" value="AdoMet_MTases"/>
    <property type="match status" value="1"/>
</dbReference>
<dbReference type="FunFam" id="3.40.50.150:FF:000147">
    <property type="entry name" value="Caffeoyl-CoA O-methyltransferase 1"/>
    <property type="match status" value="1"/>
</dbReference>
<dbReference type="Gene3D" id="3.40.50.150">
    <property type="entry name" value="Vaccinia Virus protein VP39"/>
    <property type="match status" value="1"/>
</dbReference>
<dbReference type="InterPro" id="IPR050362">
    <property type="entry name" value="Cation-dep_OMT"/>
</dbReference>
<dbReference type="InterPro" id="IPR029063">
    <property type="entry name" value="SAM-dependent_MTases_sf"/>
</dbReference>
<dbReference type="InterPro" id="IPR002935">
    <property type="entry name" value="SAM_O-MeTrfase"/>
</dbReference>
<dbReference type="PANTHER" id="PTHR10509">
    <property type="entry name" value="O-METHYLTRANSFERASE-RELATED"/>
    <property type="match status" value="1"/>
</dbReference>
<dbReference type="PANTHER" id="PTHR10509:SF34">
    <property type="entry name" value="TAPETUM-SPECIFIC METHYLTRANSFERASE 1"/>
    <property type="match status" value="1"/>
</dbReference>
<dbReference type="Pfam" id="PF01596">
    <property type="entry name" value="Methyltransf_3"/>
    <property type="match status" value="1"/>
</dbReference>
<dbReference type="SUPFAM" id="SSF53335">
    <property type="entry name" value="S-adenosyl-L-methionine-dependent methyltransferases"/>
    <property type="match status" value="1"/>
</dbReference>
<dbReference type="PROSITE" id="PS51682">
    <property type="entry name" value="SAM_OMT_I"/>
    <property type="match status" value="1"/>
</dbReference>
<gene>
    <name type="ordered locus">At1g67980</name>
    <name type="ORF">T23K23.17</name>
</gene>
<evidence type="ECO:0000250" key="1"/>
<evidence type="ECO:0000250" key="2">
    <source>
        <dbReference type="UniProtKB" id="Q40313"/>
    </source>
</evidence>
<evidence type="ECO:0000255" key="3">
    <source>
        <dbReference type="PROSITE-ProRule" id="PRU01019"/>
    </source>
</evidence>
<evidence type="ECO:0000305" key="4"/>
<name>CAMT1_ARATH</name>
<proteinExistence type="evidence at transcript level"/>
<sequence>MANEIPTKGILKSEALKQYIMETSAYPREHELLKELRKATVQKYGNLSEMEVPVDEGHFLSMLVKIMNAKNTIEIGVFTGYSLLTTALALPEDGRITAIDIDKEAYEVGLEFIKKAGVDHKINFIHSDGLKALDQLVNDKCEFDFAFADADKSSYVNFHERLLKLVKVGGIIAFDNTLWFGFVAEDEDGVPEHMREYRAALIEFNKKLALDPRVEVSQISIGDGITLCRRLV</sequence>
<protein>
    <recommendedName>
        <fullName>Putative caffeoyl-CoA O-methyltransferase At1g67980</fullName>
        <ecNumber>2.1.1.104</ecNumber>
    </recommendedName>
    <alternativeName>
        <fullName>Trans-caffeoyl-CoA 3-O-methyltransferase</fullName>
        <shortName>CCoAMT</shortName>
        <shortName>CCoAOMT</shortName>
    </alternativeName>
</protein>
<accession>Q9C9W3</accession>
<accession>Q39166</accession>
<reference key="1">
    <citation type="journal article" date="2000" name="Nature">
        <title>Sequence and analysis of chromosome 1 of the plant Arabidopsis thaliana.</title>
        <authorList>
            <person name="Theologis A."/>
            <person name="Ecker J.R."/>
            <person name="Palm C.J."/>
            <person name="Federspiel N.A."/>
            <person name="Kaul S."/>
            <person name="White O."/>
            <person name="Alonso J."/>
            <person name="Altafi H."/>
            <person name="Araujo R."/>
            <person name="Bowman C.L."/>
            <person name="Brooks S.Y."/>
            <person name="Buehler E."/>
            <person name="Chan A."/>
            <person name="Chao Q."/>
            <person name="Chen H."/>
            <person name="Cheuk R.F."/>
            <person name="Chin C.W."/>
            <person name="Chung M.K."/>
            <person name="Conn L."/>
            <person name="Conway A.B."/>
            <person name="Conway A.R."/>
            <person name="Creasy T.H."/>
            <person name="Dewar K."/>
            <person name="Dunn P."/>
            <person name="Etgu P."/>
            <person name="Feldblyum T.V."/>
            <person name="Feng J.-D."/>
            <person name="Fong B."/>
            <person name="Fujii C.Y."/>
            <person name="Gill J.E."/>
            <person name="Goldsmith A.D."/>
            <person name="Haas B."/>
            <person name="Hansen N.F."/>
            <person name="Hughes B."/>
            <person name="Huizar L."/>
            <person name="Hunter J.L."/>
            <person name="Jenkins J."/>
            <person name="Johnson-Hopson C."/>
            <person name="Khan S."/>
            <person name="Khaykin E."/>
            <person name="Kim C.J."/>
            <person name="Koo H.L."/>
            <person name="Kremenetskaia I."/>
            <person name="Kurtz D.B."/>
            <person name="Kwan A."/>
            <person name="Lam B."/>
            <person name="Langin-Hooper S."/>
            <person name="Lee A."/>
            <person name="Lee J.M."/>
            <person name="Lenz C.A."/>
            <person name="Li J.H."/>
            <person name="Li Y.-P."/>
            <person name="Lin X."/>
            <person name="Liu S.X."/>
            <person name="Liu Z.A."/>
            <person name="Luros J.S."/>
            <person name="Maiti R."/>
            <person name="Marziali A."/>
            <person name="Militscher J."/>
            <person name="Miranda M."/>
            <person name="Nguyen M."/>
            <person name="Nierman W.C."/>
            <person name="Osborne B.I."/>
            <person name="Pai G."/>
            <person name="Peterson J."/>
            <person name="Pham P.K."/>
            <person name="Rizzo M."/>
            <person name="Rooney T."/>
            <person name="Rowley D."/>
            <person name="Sakano H."/>
            <person name="Salzberg S.L."/>
            <person name="Schwartz J.R."/>
            <person name="Shinn P."/>
            <person name="Southwick A.M."/>
            <person name="Sun H."/>
            <person name="Tallon L.J."/>
            <person name="Tambunga G."/>
            <person name="Toriumi M.J."/>
            <person name="Town C.D."/>
            <person name="Utterback T."/>
            <person name="Van Aken S."/>
            <person name="Vaysberg M."/>
            <person name="Vysotskaia V.S."/>
            <person name="Walker M."/>
            <person name="Wu D."/>
            <person name="Yu G."/>
            <person name="Fraser C.M."/>
            <person name="Venter J.C."/>
            <person name="Davis R.W."/>
        </authorList>
    </citation>
    <scope>NUCLEOTIDE SEQUENCE [LARGE SCALE GENOMIC DNA]</scope>
    <source>
        <strain>cv. Columbia</strain>
    </source>
</reference>
<reference key="2">
    <citation type="journal article" date="2017" name="Plant J.">
        <title>Araport11: a complete reannotation of the Arabidopsis thaliana reference genome.</title>
        <authorList>
            <person name="Cheng C.Y."/>
            <person name="Krishnakumar V."/>
            <person name="Chan A.P."/>
            <person name="Thibaud-Nissen F."/>
            <person name="Schobel S."/>
            <person name="Town C.D."/>
        </authorList>
    </citation>
    <scope>GENOME REANNOTATION</scope>
    <source>
        <strain>cv. Columbia</strain>
    </source>
</reference>
<reference key="3">
    <citation type="journal article" date="1994" name="Plant Physiol. Biochem.">
        <title>Isolation of an Arabidopsis thaliana cDNA homologous to parsley (Petroselinum crispum) S-adenosyl-L-methionine: trans-caffeoyl-coenzyme A 3-O-methyltransferase, an enzyme involved in disease resistance.</title>
        <authorList>
            <person name="Zou J."/>
            <person name="Taylor D.C."/>
        </authorList>
    </citation>
    <scope>NUCLEOTIDE SEQUENCE [MRNA] OF 12-232</scope>
    <source>
        <strain>cv. Columbia</strain>
    </source>
</reference>
<organism>
    <name type="scientific">Arabidopsis thaliana</name>
    <name type="common">Mouse-ear cress</name>
    <dbReference type="NCBI Taxonomy" id="3702"/>
    <lineage>
        <taxon>Eukaryota</taxon>
        <taxon>Viridiplantae</taxon>
        <taxon>Streptophyta</taxon>
        <taxon>Embryophyta</taxon>
        <taxon>Tracheophyta</taxon>
        <taxon>Spermatophyta</taxon>
        <taxon>Magnoliopsida</taxon>
        <taxon>eudicotyledons</taxon>
        <taxon>Gunneridae</taxon>
        <taxon>Pentapetalae</taxon>
        <taxon>rosids</taxon>
        <taxon>malvids</taxon>
        <taxon>Brassicales</taxon>
        <taxon>Brassicaceae</taxon>
        <taxon>Camelineae</taxon>
        <taxon>Arabidopsis</taxon>
    </lineage>
</organism>
<comment type="function">
    <text evidence="1">Methylates caffeoyl-CoA to feruloyl-CoA and 5-hydroxyferuloyl-CoA to sinapoyl-CoA. Plays a role in the synthesis of feruloylated polysaccharides. Involved in the reinforcement of the plant cell wall. Also involved in the responding to wounding or pathogen challenge by the increased formation of cell wall-bound ferulic acid polymers (By similarity).</text>
</comment>
<comment type="catalytic activity">
    <reaction>
        <text>(E)-caffeoyl-CoA + S-adenosyl-L-methionine = (E)-feruloyl-CoA + S-adenosyl-L-homocysteine + H(+)</text>
        <dbReference type="Rhea" id="RHEA:16925"/>
        <dbReference type="ChEBI" id="CHEBI:15378"/>
        <dbReference type="ChEBI" id="CHEBI:57856"/>
        <dbReference type="ChEBI" id="CHEBI:59789"/>
        <dbReference type="ChEBI" id="CHEBI:87136"/>
        <dbReference type="ChEBI" id="CHEBI:87305"/>
        <dbReference type="EC" id="2.1.1.104"/>
    </reaction>
</comment>
<comment type="cofactor">
    <cofactor evidence="2">
        <name>a divalent metal cation</name>
        <dbReference type="ChEBI" id="CHEBI:60240"/>
    </cofactor>
    <text evidence="2">Binds 1 divalent metal cation per subunit.</text>
</comment>
<comment type="pathway">
    <text>Aromatic compound metabolism; phenylpropanoid biosynthesis.</text>
</comment>
<comment type="alternative products">
    <event type="alternative splicing"/>
    <isoform>
        <id>Q9C9W3-1</id>
        <name>1</name>
        <sequence type="displayed"/>
    </isoform>
    <text>A number of isoforms are produced. According to EST sequences.</text>
</comment>
<comment type="similarity">
    <text evidence="3">Belongs to the class I-like SAM-binding methyltransferase superfamily. Cation-dependent O-methyltransferase family. CCoAMT subfamily.</text>
</comment>
<comment type="sequence caution" evidence="4">
    <conflict type="erroneous initiation">
        <sequence resource="EMBL-CDS" id="AAA62426"/>
    </conflict>
</comment>
<keyword id="KW-0025">Alternative splicing</keyword>
<keyword id="KW-0438">Lignin biosynthesis</keyword>
<keyword id="KW-0479">Metal-binding</keyword>
<keyword id="KW-0489">Methyltransferase</keyword>
<keyword id="KW-1185">Reference proteome</keyword>
<keyword id="KW-0949">S-adenosyl-L-methionine</keyword>
<keyword id="KW-0808">Transferase</keyword>
<feature type="chain" id="PRO_0000165676" description="Putative caffeoyl-CoA O-methyltransferase At1g67980">
    <location>
        <begin position="1"/>
        <end position="232"/>
    </location>
</feature>
<feature type="binding site" evidence="2">
    <location>
        <position position="8"/>
    </location>
    <ligand>
        <name>substrate</name>
    </ligand>
</feature>
<feature type="binding site" evidence="3">
    <location>
        <position position="52"/>
    </location>
    <ligand>
        <name>S-adenosyl-L-methionine</name>
        <dbReference type="ChEBI" id="CHEBI:59789"/>
    </ligand>
</feature>
<feature type="binding site" evidence="3">
    <location>
        <position position="74"/>
    </location>
    <ligand>
        <name>S-adenosyl-L-methionine</name>
        <dbReference type="ChEBI" id="CHEBI:59789"/>
    </ligand>
</feature>
<feature type="binding site" evidence="3">
    <location>
        <begin position="76"/>
        <end position="77"/>
    </location>
    <ligand>
        <name>S-adenosyl-L-methionine</name>
        <dbReference type="ChEBI" id="CHEBI:59789"/>
    </ligand>
</feature>
<feature type="binding site" evidence="3">
    <location>
        <position position="82"/>
    </location>
    <ligand>
        <name>S-adenosyl-L-methionine</name>
        <dbReference type="ChEBI" id="CHEBI:59789"/>
    </ligand>
</feature>
<feature type="binding site" evidence="3">
    <location>
        <position position="100"/>
    </location>
    <ligand>
        <name>S-adenosyl-L-methionine</name>
        <dbReference type="ChEBI" id="CHEBI:59789"/>
    </ligand>
</feature>
<feature type="binding site" evidence="3">
    <location>
        <position position="149"/>
    </location>
    <ligand>
        <name>a divalent metal cation</name>
        <dbReference type="ChEBI" id="CHEBI:60240"/>
    </ligand>
</feature>
<feature type="binding site" evidence="2">
    <location>
        <position position="149"/>
    </location>
    <ligand>
        <name>substrate</name>
    </ligand>
</feature>
<feature type="binding site" evidence="3">
    <location>
        <position position="151"/>
    </location>
    <ligand>
        <name>S-adenosyl-L-methionine</name>
        <dbReference type="ChEBI" id="CHEBI:59789"/>
    </ligand>
</feature>
<feature type="binding site" evidence="3">
    <location>
        <position position="175"/>
    </location>
    <ligand>
        <name>a divalent metal cation</name>
        <dbReference type="ChEBI" id="CHEBI:60240"/>
    </ligand>
</feature>
<feature type="binding site" evidence="3">
    <location>
        <position position="176"/>
    </location>
    <ligand>
        <name>a divalent metal cation</name>
        <dbReference type="ChEBI" id="CHEBI:60240"/>
    </ligand>
</feature>
<feature type="sequence conflict" description="In Ref. 3; AAA62426." evidence="4" ref="3">
    <original>AF</original>
    <variation>GL</variation>
    <location>
        <begin position="146"/>
        <end position="147"/>
    </location>
</feature>
<feature type="sequence conflict" description="In Ref. 3; AAA62426." evidence="4" ref="3">
    <original>K</original>
    <variation>M</variation>
    <location>
        <position position="167"/>
    </location>
</feature>
<feature type="sequence conflict" description="In Ref. 3; AAA62426." evidence="4" ref="3">
    <original>A</original>
    <variation>T</variation>
    <location>
        <position position="199"/>
    </location>
</feature>
<feature type="sequence conflict" description="In Ref. 3; AAA62426." evidence="4" ref="3">
    <original>V</original>
    <variation>L</variation>
    <location>
        <position position="216"/>
    </location>
</feature>